<proteinExistence type="evidence at transcript level"/>
<organism>
    <name type="scientific">Solanum lycopersicum</name>
    <name type="common">Tomato</name>
    <name type="synonym">Lycopersicon esculentum</name>
    <dbReference type="NCBI Taxonomy" id="4081"/>
    <lineage>
        <taxon>Eukaryota</taxon>
        <taxon>Viridiplantae</taxon>
        <taxon>Streptophyta</taxon>
        <taxon>Embryophyta</taxon>
        <taxon>Tracheophyta</taxon>
        <taxon>Spermatophyta</taxon>
        <taxon>Magnoliopsida</taxon>
        <taxon>eudicotyledons</taxon>
        <taxon>Gunneridae</taxon>
        <taxon>Pentapetalae</taxon>
        <taxon>asterids</taxon>
        <taxon>lamiids</taxon>
        <taxon>Solanales</taxon>
        <taxon>Solanaceae</taxon>
        <taxon>Solanoideae</taxon>
        <taxon>Solaneae</taxon>
        <taxon>Solanum</taxon>
        <taxon>Solanum subgen. Lycopersicon</taxon>
    </lineage>
</organism>
<protein>
    <recommendedName>
        <fullName>Eukaryotic translation initiation factor 5A-3</fullName>
        <shortName>eIF-5A-3</shortName>
    </recommendedName>
</protein>
<name>IF5A3_SOLLC</name>
<keyword id="KW-0385">Hypusine</keyword>
<keyword id="KW-0396">Initiation factor</keyword>
<keyword id="KW-0648">Protein biosynthesis</keyword>
<keyword id="KW-1185">Reference proteome</keyword>
<reference key="1">
    <citation type="journal article" date="2001" name="J. Biol. Chem.">
        <title>Isolation and characterization of senescence-induced cDNAs encoding deoxyhypusine synthase and eucaryotic translation initiation factor 5A from tomato.</title>
        <authorList>
            <person name="Wang T.-W."/>
            <person name="Lu L."/>
            <person name="Wang D."/>
            <person name="Thompson J.E."/>
        </authorList>
    </citation>
    <scope>NUCLEOTIDE SEQUENCE [MRNA]</scope>
    <source>
        <strain>cv. Match</strain>
    </source>
</reference>
<evidence type="ECO:0000250" key="1">
    <source>
        <dbReference type="UniProtKB" id="P23301"/>
    </source>
</evidence>
<evidence type="ECO:0000250" key="2">
    <source>
        <dbReference type="UniProtKB" id="Q9XI91"/>
    </source>
</evidence>
<evidence type="ECO:0000256" key="3">
    <source>
        <dbReference type="SAM" id="MobiDB-lite"/>
    </source>
</evidence>
<evidence type="ECO:0000305" key="4"/>
<sequence>MSDEEHQFESKADAGASKTYPQQAGTIRKNGYIVIKGRPCKVVEVSTSKTGKHGHAKCHFVAIDIFTGKKLEDIVPSSHNCDVPHVNRTDYQLIDISEDGFVSLLTDNGNTKDDLRLPTDENLLSLIKDGFAEGKDLVVSVMSAMGEEQINALKDIGPK</sequence>
<dbReference type="EMBL" id="AF296085">
    <property type="protein sequence ID" value="AAG53649.1"/>
    <property type="molecule type" value="mRNA"/>
</dbReference>
<dbReference type="RefSeq" id="NP_001234507.1">
    <property type="nucleotide sequence ID" value="NM_001247578.1"/>
</dbReference>
<dbReference type="SMR" id="Q9AXQ4"/>
<dbReference type="FunCoup" id="Q9AXQ4">
    <property type="interactions" value="1946"/>
</dbReference>
<dbReference type="STRING" id="4081.Q9AXQ4"/>
<dbReference type="PaxDb" id="4081-Solyc01g011000.2.1"/>
<dbReference type="EnsemblPlants" id="Solyc01g011000.3.1">
    <property type="protein sequence ID" value="Solyc01g011000.3.1"/>
    <property type="gene ID" value="Solyc01g011000.3"/>
</dbReference>
<dbReference type="GeneID" id="543669"/>
<dbReference type="Gramene" id="Solyc01g011000.3.1">
    <property type="protein sequence ID" value="Solyc01g011000.3.1"/>
    <property type="gene ID" value="Solyc01g011000.3"/>
</dbReference>
<dbReference type="KEGG" id="sly:543669"/>
<dbReference type="eggNOG" id="KOG3271">
    <property type="taxonomic scope" value="Eukaryota"/>
</dbReference>
<dbReference type="HOGENOM" id="CLU_102600_1_0_1"/>
<dbReference type="InParanoid" id="Q9AXQ4"/>
<dbReference type="OMA" id="KDDVRMP"/>
<dbReference type="OrthoDB" id="9975114at2759"/>
<dbReference type="PhylomeDB" id="Q9AXQ4"/>
<dbReference type="Proteomes" id="UP000004994">
    <property type="component" value="Chromosome 1"/>
</dbReference>
<dbReference type="GO" id="GO:0043022">
    <property type="term" value="F:ribosome binding"/>
    <property type="evidence" value="ECO:0007669"/>
    <property type="project" value="InterPro"/>
</dbReference>
<dbReference type="GO" id="GO:0003723">
    <property type="term" value="F:RNA binding"/>
    <property type="evidence" value="ECO:0007669"/>
    <property type="project" value="InterPro"/>
</dbReference>
<dbReference type="GO" id="GO:0003746">
    <property type="term" value="F:translation elongation factor activity"/>
    <property type="evidence" value="ECO:0000318"/>
    <property type="project" value="GO_Central"/>
</dbReference>
<dbReference type="GO" id="GO:0003743">
    <property type="term" value="F:translation initiation factor activity"/>
    <property type="evidence" value="ECO:0007669"/>
    <property type="project" value="UniProtKB-KW"/>
</dbReference>
<dbReference type="GO" id="GO:0045901">
    <property type="term" value="P:positive regulation of translational elongation"/>
    <property type="evidence" value="ECO:0007669"/>
    <property type="project" value="InterPro"/>
</dbReference>
<dbReference type="GO" id="GO:0045905">
    <property type="term" value="P:positive regulation of translational termination"/>
    <property type="evidence" value="ECO:0007669"/>
    <property type="project" value="InterPro"/>
</dbReference>
<dbReference type="GO" id="GO:0006414">
    <property type="term" value="P:translational elongation"/>
    <property type="evidence" value="ECO:0000318"/>
    <property type="project" value="GO_Central"/>
</dbReference>
<dbReference type="CDD" id="cd04468">
    <property type="entry name" value="S1_eIF5A"/>
    <property type="match status" value="1"/>
</dbReference>
<dbReference type="FunFam" id="2.30.30.30:FF:000012">
    <property type="entry name" value="Eukaryotic translation initiation factor 5A"/>
    <property type="match status" value="1"/>
</dbReference>
<dbReference type="FunFam" id="2.40.50.140:FF:000034">
    <property type="entry name" value="Eukaryotic translation initiation factor 5A"/>
    <property type="match status" value="1"/>
</dbReference>
<dbReference type="Gene3D" id="2.30.30.30">
    <property type="match status" value="1"/>
</dbReference>
<dbReference type="Gene3D" id="2.40.50.140">
    <property type="entry name" value="Nucleic acid-binding proteins"/>
    <property type="match status" value="1"/>
</dbReference>
<dbReference type="InterPro" id="IPR001884">
    <property type="entry name" value="IF5A-like"/>
</dbReference>
<dbReference type="InterPro" id="IPR048670">
    <property type="entry name" value="IF5A-like_N"/>
</dbReference>
<dbReference type="InterPro" id="IPR012340">
    <property type="entry name" value="NA-bd_OB-fold"/>
</dbReference>
<dbReference type="InterPro" id="IPR014722">
    <property type="entry name" value="Rib_uL2_dom2"/>
</dbReference>
<dbReference type="InterPro" id="IPR019769">
    <property type="entry name" value="Trans_elong_IF5A_hypusine_site"/>
</dbReference>
<dbReference type="InterPro" id="IPR020189">
    <property type="entry name" value="Transl_elong_IF5A_C"/>
</dbReference>
<dbReference type="InterPro" id="IPR008991">
    <property type="entry name" value="Translation_prot_SH3-like_sf"/>
</dbReference>
<dbReference type="NCBIfam" id="TIGR00037">
    <property type="entry name" value="eIF_5A"/>
    <property type="match status" value="1"/>
</dbReference>
<dbReference type="PANTHER" id="PTHR11673">
    <property type="entry name" value="TRANSLATION INITIATION FACTOR 5A FAMILY MEMBER"/>
    <property type="match status" value="1"/>
</dbReference>
<dbReference type="Pfam" id="PF01287">
    <property type="entry name" value="eIF-5a"/>
    <property type="match status" value="1"/>
</dbReference>
<dbReference type="Pfam" id="PF21485">
    <property type="entry name" value="IF5A-like_N"/>
    <property type="match status" value="1"/>
</dbReference>
<dbReference type="PIRSF" id="PIRSF003025">
    <property type="entry name" value="eIF5A"/>
    <property type="match status" value="1"/>
</dbReference>
<dbReference type="SMART" id="SM01376">
    <property type="entry name" value="eIF-5a"/>
    <property type="match status" value="1"/>
</dbReference>
<dbReference type="SUPFAM" id="SSF50249">
    <property type="entry name" value="Nucleic acid-binding proteins"/>
    <property type="match status" value="1"/>
</dbReference>
<dbReference type="SUPFAM" id="SSF50104">
    <property type="entry name" value="Translation proteins SH3-like domain"/>
    <property type="match status" value="1"/>
</dbReference>
<dbReference type="PROSITE" id="PS00302">
    <property type="entry name" value="IF5A_HYPUSINE"/>
    <property type="match status" value="1"/>
</dbReference>
<accession>Q9AXQ4</accession>
<feature type="chain" id="PRO_0000142469" description="Eukaryotic translation initiation factor 5A-3">
    <location>
        <begin position="1"/>
        <end position="159"/>
    </location>
</feature>
<feature type="region of interest" description="Disordered" evidence="3">
    <location>
        <begin position="1"/>
        <end position="21"/>
    </location>
</feature>
<feature type="compositionally biased region" description="Basic and acidic residues" evidence="3">
    <location>
        <begin position="1"/>
        <end position="12"/>
    </location>
</feature>
<feature type="modified residue" description="Hypusine" evidence="2">
    <location>
        <position position="52"/>
    </location>
</feature>
<comment type="function">
    <text evidence="1">Translation factor that promotes translation elongation and termination, particularly upon ribosome stalling at specific amino acid sequence contexts (By similarity). Binds between the exit (E) and peptidyl (P) site of the ribosome and promotes rescue of stalled ribosome: specifically required for efficient translation of polyproline-containing peptides as well as other motifs that stall the ribosome (By similarity). Acts as a ribosome quality control (RQC) cofactor by joining the RQC complex to facilitate peptidyl transfer during CAT tailing step (By similarity).</text>
</comment>
<comment type="PTM">
    <text evidence="2">Lys-52 undergoes hypusination, a unique post-translational modification that consists in the addition of a butylamino group from spermidine to lysine side chain, leading to the formation of the unusual amino acid hypusine. eIF-5As are the only known proteins to undergo this modification, which is essential for their function.</text>
</comment>
<comment type="similarity">
    <text evidence="4">Belongs to the eIF-5A family.</text>
</comment>